<keyword id="KW-0150">Chloroplast</keyword>
<keyword id="KW-0472">Membrane</keyword>
<keyword id="KW-0934">Plastid</keyword>
<keyword id="KW-1185">Reference proteome</keyword>
<keyword id="KW-0793">Thylakoid</keyword>
<keyword id="KW-0809">Transit peptide</keyword>
<reference key="1">
    <citation type="journal article" date="1999" name="Nature">
        <title>Sequence and analysis of chromosome 2 of the plant Arabidopsis thaliana.</title>
        <authorList>
            <person name="Lin X."/>
            <person name="Kaul S."/>
            <person name="Rounsley S.D."/>
            <person name="Shea T.P."/>
            <person name="Benito M.-I."/>
            <person name="Town C.D."/>
            <person name="Fujii C.Y."/>
            <person name="Mason T.M."/>
            <person name="Bowman C.L."/>
            <person name="Barnstead M.E."/>
            <person name="Feldblyum T.V."/>
            <person name="Buell C.R."/>
            <person name="Ketchum K.A."/>
            <person name="Lee J.J."/>
            <person name="Ronning C.M."/>
            <person name="Koo H.L."/>
            <person name="Moffat K.S."/>
            <person name="Cronin L.A."/>
            <person name="Shen M."/>
            <person name="Pai G."/>
            <person name="Van Aken S."/>
            <person name="Umayam L."/>
            <person name="Tallon L.J."/>
            <person name="Gill J.E."/>
            <person name="Adams M.D."/>
            <person name="Carrera A.J."/>
            <person name="Creasy T.H."/>
            <person name="Goodman H.M."/>
            <person name="Somerville C.R."/>
            <person name="Copenhaver G.P."/>
            <person name="Preuss D."/>
            <person name="Nierman W.C."/>
            <person name="White O."/>
            <person name="Eisen J.A."/>
            <person name="Salzberg S.L."/>
            <person name="Fraser C.M."/>
            <person name="Venter J.C."/>
        </authorList>
    </citation>
    <scope>NUCLEOTIDE SEQUENCE [LARGE SCALE GENOMIC DNA]</scope>
    <source>
        <strain>cv. Columbia</strain>
    </source>
</reference>
<reference key="2">
    <citation type="journal article" date="2017" name="Plant J.">
        <title>Araport11: a complete reannotation of the Arabidopsis thaliana reference genome.</title>
        <authorList>
            <person name="Cheng C.Y."/>
            <person name="Krishnakumar V."/>
            <person name="Chan A.P."/>
            <person name="Thibaud-Nissen F."/>
            <person name="Schobel S."/>
            <person name="Town C.D."/>
        </authorList>
    </citation>
    <scope>GENOME REANNOTATION</scope>
    <source>
        <strain>cv. Columbia</strain>
    </source>
</reference>
<reference key="3">
    <citation type="journal article" date="2006" name="Plant Biotechnol. J.">
        <title>Simultaneous high-throughput recombinational cloning of open reading frames in closed and open configurations.</title>
        <authorList>
            <person name="Underwood B.A."/>
            <person name="Vanderhaeghen R."/>
            <person name="Whitford R."/>
            <person name="Town C.D."/>
            <person name="Hilson P."/>
        </authorList>
    </citation>
    <scope>NUCLEOTIDE SEQUENCE [LARGE SCALE MRNA]</scope>
    <source>
        <strain>cv. Columbia</strain>
    </source>
</reference>
<reference key="4">
    <citation type="journal article" date="2010" name="Plant Cell Physiol.">
        <title>Three PsbQ-like proteins are required for the function of the chloroplast NAD(P)H dehydrogenase complex in Arabidopsis.</title>
        <authorList>
            <person name="Yabuta S."/>
            <person name="Ifuku K."/>
            <person name="Takabayashi A."/>
            <person name="Ishihara S."/>
            <person name="Ido K."/>
            <person name="Ishikawa N."/>
            <person name="Endo T."/>
            <person name="Sato F."/>
        </authorList>
    </citation>
    <scope>FUNCTION</scope>
    <scope>DISRUPTION PHENOTYPE</scope>
    <scope>NOMENCLATURE</scope>
    <source>
        <strain>cv. Columbia</strain>
    </source>
</reference>
<comment type="function">
    <text evidence="3">Required for both formation and activity of the chloroplast NAD(P)H dehydrogenase (NDH) complex.</text>
</comment>
<comment type="subunit">
    <text evidence="1">Subunit of the lumenal protuberance of the NDH complex.</text>
</comment>
<comment type="subcellular location">
    <subcellularLocation>
        <location evidence="1">Plastid</location>
        <location evidence="1">Chloroplast thylakoid membrane</location>
        <topology evidence="1">Peripheral membrane protein</topology>
        <orientation evidence="1">Lumenal side</orientation>
    </subcellularLocation>
    <text evidence="1">Associated with the chloroplast NAD(P)H dehydrogenase/photosystem I (NDH/PSI) supercomplex.</text>
</comment>
<comment type="disruption phenotype">
    <text evidence="3">Impaired chloroplastic NAD(P)H dehydrogenase (NDH) activity, probably due to a reduced stability of the NDH complex.</text>
</comment>
<comment type="similarity">
    <text evidence="4">Belongs to the PsbQ family.</text>
</comment>
<evidence type="ECO:0000250" key="1"/>
<evidence type="ECO:0000255" key="2"/>
<evidence type="ECO:0000269" key="3">
    <source>
    </source>
</evidence>
<evidence type="ECO:0000305" key="4"/>
<protein>
    <recommendedName>
        <fullName>PsbQ-like protein 3, chloroplastic</fullName>
    </recommendedName>
</protein>
<organism>
    <name type="scientific">Arabidopsis thaliana</name>
    <name type="common">Mouse-ear cress</name>
    <dbReference type="NCBI Taxonomy" id="3702"/>
    <lineage>
        <taxon>Eukaryota</taxon>
        <taxon>Viridiplantae</taxon>
        <taxon>Streptophyta</taxon>
        <taxon>Embryophyta</taxon>
        <taxon>Tracheophyta</taxon>
        <taxon>Spermatophyta</taxon>
        <taxon>Magnoliopsida</taxon>
        <taxon>eudicotyledons</taxon>
        <taxon>Gunneridae</taxon>
        <taxon>Pentapetalae</taxon>
        <taxon>rosids</taxon>
        <taxon>malvids</taxon>
        <taxon>Brassicales</taxon>
        <taxon>Brassicaceae</taxon>
        <taxon>Camelineae</taxon>
        <taxon>Arabidopsis</taxon>
    </lineage>
</organism>
<proteinExistence type="evidence at transcript level"/>
<gene>
    <name type="primary">PQL3</name>
    <name type="ordered locus">At2g01918</name>
    <name type="ORF">F23I14</name>
    <name type="ORF">T23K3</name>
</gene>
<sequence length="187" mass="21534">MAISKPPPLHFTFFHNQDSSIDTSDSNLALSIDTSRRRRDVLLTISGTLIPQLFFFDRKRSSSANAADFFNFGAPPPEPERTVELAQEGLRKNAENIKRIKEIMIEKKLWKEGGKELRRSASNMKQDFYLIIQAKPPKDRPLFRSLYSSLFNSITKMDYAARDGDETKVLEYYINIVAILDDIFPRI</sequence>
<feature type="transit peptide" description="Chloroplast" evidence="2">
    <location>
        <begin position="1"/>
        <end position="32"/>
    </location>
</feature>
<feature type="transit peptide" description="Thylakoid" evidence="1">
    <location>
        <begin position="33"/>
        <end position="60"/>
    </location>
</feature>
<feature type="chain" id="PRO_0000419237" description="PsbQ-like protein 3, chloroplastic">
    <location>
        <begin position="61"/>
        <end position="187"/>
    </location>
</feature>
<name>PQL3_ARATH</name>
<dbReference type="EMBL" id="AC007069">
    <property type="status" value="NOT_ANNOTATED_CDS"/>
    <property type="molecule type" value="Genomic_DNA"/>
</dbReference>
<dbReference type="EMBL" id="AC007265">
    <property type="status" value="NOT_ANNOTATED_CDS"/>
    <property type="molecule type" value="Genomic_DNA"/>
</dbReference>
<dbReference type="EMBL" id="CP002685">
    <property type="protein sequence ID" value="AEC05519.1"/>
    <property type="molecule type" value="Genomic_DNA"/>
</dbReference>
<dbReference type="EMBL" id="DQ487506">
    <property type="protein sequence ID" value="ABF59209.1"/>
    <property type="molecule type" value="mRNA"/>
</dbReference>
<dbReference type="RefSeq" id="NP_001030947.1">
    <property type="nucleotide sequence ID" value="NM_001035870.4"/>
</dbReference>
<dbReference type="SMR" id="Q2V4B2"/>
<dbReference type="FunCoup" id="Q2V4B2">
    <property type="interactions" value="607"/>
</dbReference>
<dbReference type="STRING" id="3702.Q2V4B2"/>
<dbReference type="PaxDb" id="3702-AT2G01918.1"/>
<dbReference type="ProteomicsDB" id="234835"/>
<dbReference type="EnsemblPlants" id="AT2G01918.1">
    <property type="protein sequence ID" value="AT2G01918.1"/>
    <property type="gene ID" value="AT2G01918"/>
</dbReference>
<dbReference type="GeneID" id="3768499"/>
<dbReference type="Gramene" id="AT2G01918.1">
    <property type="protein sequence ID" value="AT2G01918.1"/>
    <property type="gene ID" value="AT2G01918"/>
</dbReference>
<dbReference type="KEGG" id="ath:AT2G01918"/>
<dbReference type="Araport" id="AT2G01918"/>
<dbReference type="TAIR" id="AT2G01918">
    <property type="gene designation" value="PQL3"/>
</dbReference>
<dbReference type="eggNOG" id="ENOG502S24S">
    <property type="taxonomic scope" value="Eukaryota"/>
</dbReference>
<dbReference type="HOGENOM" id="CLU_090469_0_0_1"/>
<dbReference type="InParanoid" id="Q2V4B2"/>
<dbReference type="OMA" id="ITKMDYA"/>
<dbReference type="OrthoDB" id="667835at2759"/>
<dbReference type="PhylomeDB" id="Q2V4B2"/>
<dbReference type="BioCyc" id="ARA:AT2G01918-MONOMER"/>
<dbReference type="PRO" id="PR:Q2V4B2"/>
<dbReference type="Proteomes" id="UP000006548">
    <property type="component" value="Chromosome 2"/>
</dbReference>
<dbReference type="ExpressionAtlas" id="Q2V4B2">
    <property type="expression patterns" value="baseline and differential"/>
</dbReference>
<dbReference type="GO" id="GO:0009543">
    <property type="term" value="C:chloroplast thylakoid lumen"/>
    <property type="evidence" value="ECO:0000314"/>
    <property type="project" value="TAIR"/>
</dbReference>
<dbReference type="GO" id="GO:0009535">
    <property type="term" value="C:chloroplast thylakoid membrane"/>
    <property type="evidence" value="ECO:0007669"/>
    <property type="project" value="UniProtKB-SubCell"/>
</dbReference>
<dbReference type="GO" id="GO:0019898">
    <property type="term" value="C:extrinsic component of membrane"/>
    <property type="evidence" value="ECO:0007669"/>
    <property type="project" value="InterPro"/>
</dbReference>
<dbReference type="GO" id="GO:0009654">
    <property type="term" value="C:photosystem II oxygen evolving complex"/>
    <property type="evidence" value="ECO:0007669"/>
    <property type="project" value="InterPro"/>
</dbReference>
<dbReference type="GO" id="GO:0005509">
    <property type="term" value="F:calcium ion binding"/>
    <property type="evidence" value="ECO:0007669"/>
    <property type="project" value="InterPro"/>
</dbReference>
<dbReference type="GO" id="GO:0045156">
    <property type="term" value="F:electron transporter, transferring electrons within the cyclic electron transport pathway of photosynthesis activity"/>
    <property type="evidence" value="ECO:0000315"/>
    <property type="project" value="TAIR"/>
</dbReference>
<dbReference type="GO" id="GO:0009767">
    <property type="term" value="P:photosynthetic electron transport chain"/>
    <property type="evidence" value="ECO:0000315"/>
    <property type="project" value="TAIR"/>
</dbReference>
<dbReference type="GO" id="GO:0009409">
    <property type="term" value="P:response to cold"/>
    <property type="evidence" value="ECO:0000315"/>
    <property type="project" value="TAIR"/>
</dbReference>
<dbReference type="Gene3D" id="1.20.120.290">
    <property type="entry name" value="Oxygen-evolving enhancer protein 3 (PsbQ), four-helix up-down bundle"/>
    <property type="match status" value="1"/>
</dbReference>
<dbReference type="InterPro" id="IPR023222">
    <property type="entry name" value="PsbQ-like_dom_sf"/>
</dbReference>
<dbReference type="InterPro" id="IPR008797">
    <property type="entry name" value="PSII_PsbQ"/>
</dbReference>
<dbReference type="InterPro" id="IPR054099">
    <property type="entry name" value="PSII_PsbQ_pln"/>
</dbReference>
<dbReference type="PANTHER" id="PTHR33399">
    <property type="entry name" value="OXYGEN-EVOLVING ENHANCER PROTEIN 3-1, CHLOROPLASTIC"/>
    <property type="match status" value="1"/>
</dbReference>
<dbReference type="PANTHER" id="PTHR33399:SF6">
    <property type="entry name" value="PSBQ-LIKE PROTEIN 3, CHLOROPLASTIC"/>
    <property type="match status" value="1"/>
</dbReference>
<dbReference type="Pfam" id="PF05757">
    <property type="entry name" value="PsbQ"/>
    <property type="match status" value="1"/>
</dbReference>
<dbReference type="SUPFAM" id="SSF101112">
    <property type="entry name" value="Oxygen-evolving enhancer protein 3"/>
    <property type="match status" value="1"/>
</dbReference>
<accession>Q2V4B2</accession>